<accession>Q02195</accession>
<reference key="1">
    <citation type="journal article" date="1991" name="In Vitro Cell. Dev. Biol.">
        <title>Sequence of rat keratinocyte growth factor (heparin-binding growth factor type 7).</title>
        <authorList>
            <person name="Yan G."/>
            <person name="Nikolaropoulos S."/>
            <person name="Wang F."/>
            <person name="McKeehan W.L."/>
        </authorList>
    </citation>
    <scope>NUCLEOTIDE SEQUENCE [MRNA]</scope>
</reference>
<reference key="2">
    <citation type="journal article" date="2006" name="Proc. Natl. Acad. Sci. U.S.A.">
        <title>Quantitative phosphoproteomics of vasopressin-sensitive renal cells: regulation of aquaporin-2 phosphorylation at two sites.</title>
        <authorList>
            <person name="Hoffert J.D."/>
            <person name="Pisitkun T."/>
            <person name="Wang G."/>
            <person name="Shen R.-F."/>
            <person name="Knepper M.A."/>
        </authorList>
    </citation>
    <scope>IDENTIFICATION BY MASS SPECTROMETRY [LARGE SCALE ANALYSIS]</scope>
</reference>
<reference key="3">
    <citation type="journal article" date="2001" name="Biochemistry">
        <title>Structural basis for interaction of FGF-1, FGF-2, and FGF-7 with different heparan sulfate motifs.</title>
        <authorList>
            <person name="Ye S."/>
            <person name="Luo Y."/>
            <person name="Lu W."/>
            <person name="Jones R.B."/>
            <person name="Linhardt R.J."/>
            <person name="Capila I."/>
            <person name="Toida T."/>
            <person name="Kan M."/>
            <person name="Pelletier H."/>
            <person name="McKeehan W.L."/>
        </authorList>
    </citation>
    <scope>X-RAY CRYSTALLOGRAPHY (2.3 ANGSTROMS) OF 55-150</scope>
    <scope>HEPARIN BINDING</scope>
</reference>
<sequence>MRKWILTRILPTPLYRPCFHLVCLVGTISLACNDMSPEQTATSVNCSSPERHTRSYDYMEGGDIRVRRLFCRTQWYLRIDKRGKVKGTQEMRNSYNIMEIMTVAVGIVAIKGVESEYYLAMNKQGELYAKKECNEDCNFKELILENHYNTSASAKWTHSGGEMFVALNQKGLPVKGKKTKKEQKTAHFLPMAIT</sequence>
<name>FGF7_RAT</name>
<protein>
    <recommendedName>
        <fullName>Fibroblast growth factor 7</fullName>
        <shortName>FGF-7</shortName>
    </recommendedName>
    <alternativeName>
        <fullName>Heparin-binding growth factor 7</fullName>
        <shortName>HBGF-7</shortName>
    </alternativeName>
    <alternativeName>
        <fullName>Keratinocyte growth factor</fullName>
    </alternativeName>
</protein>
<proteinExistence type="evidence at protein level"/>
<comment type="function">
    <text>Growth factor active on keratinocytes. Possible major paracrine effector of normal epithelial cell proliferation.</text>
</comment>
<comment type="subunit">
    <text evidence="1">Interacts with FGFBP1. Interacts with FGFR2 (By similarity). Affinity between fibroblast growth factors (FGFs) and their receptors is increased by heparan sulfate glycosaminoglycans that function as coreceptors.</text>
</comment>
<comment type="similarity">
    <text evidence="3">Belongs to the heparin-binding growth factors family.</text>
</comment>
<keyword id="KW-0002">3D-structure</keyword>
<keyword id="KW-0325">Glycoprotein</keyword>
<keyword id="KW-0339">Growth factor</keyword>
<keyword id="KW-0358">Heparin-binding</keyword>
<keyword id="KW-0497">Mitogen</keyword>
<keyword id="KW-1185">Reference proteome</keyword>
<keyword id="KW-0732">Signal</keyword>
<gene>
    <name type="primary">Fgf7</name>
    <name type="synonym">Fgf-7</name>
    <name type="synonym">Kgf</name>
</gene>
<organism>
    <name type="scientific">Rattus norvegicus</name>
    <name type="common">Rat</name>
    <dbReference type="NCBI Taxonomy" id="10116"/>
    <lineage>
        <taxon>Eukaryota</taxon>
        <taxon>Metazoa</taxon>
        <taxon>Chordata</taxon>
        <taxon>Craniata</taxon>
        <taxon>Vertebrata</taxon>
        <taxon>Euteleostomi</taxon>
        <taxon>Mammalia</taxon>
        <taxon>Eutheria</taxon>
        <taxon>Euarchontoglires</taxon>
        <taxon>Glires</taxon>
        <taxon>Rodentia</taxon>
        <taxon>Myomorpha</taxon>
        <taxon>Muroidea</taxon>
        <taxon>Muridae</taxon>
        <taxon>Murinae</taxon>
        <taxon>Rattus</taxon>
    </lineage>
</organism>
<dbReference type="EMBL" id="X56551">
    <property type="protein sequence ID" value="CAA39892.1"/>
    <property type="molecule type" value="mRNA"/>
</dbReference>
<dbReference type="PIR" id="S26049">
    <property type="entry name" value="S26049"/>
</dbReference>
<dbReference type="RefSeq" id="NP_071518.1">
    <property type="nucleotide sequence ID" value="NM_022182.1"/>
</dbReference>
<dbReference type="PDB" id="1QQK">
    <property type="method" value="X-ray"/>
    <property type="resolution" value="3.10 A"/>
    <property type="chains" value="A/B=55-194"/>
</dbReference>
<dbReference type="PDB" id="1QQL">
    <property type="method" value="X-ray"/>
    <property type="resolution" value="2.30 A"/>
    <property type="chains" value="A=55-130"/>
</dbReference>
<dbReference type="PDBsum" id="1QQK"/>
<dbReference type="PDBsum" id="1QQL"/>
<dbReference type="SMR" id="Q02195"/>
<dbReference type="FunCoup" id="Q02195">
    <property type="interactions" value="483"/>
</dbReference>
<dbReference type="STRING" id="10116.ENSRNOP00000012700"/>
<dbReference type="GlyCosmos" id="Q02195">
    <property type="glycosylation" value="2 sites, No reported glycans"/>
</dbReference>
<dbReference type="GlyGen" id="Q02195">
    <property type="glycosylation" value="2 sites"/>
</dbReference>
<dbReference type="iPTMnet" id="Q02195"/>
<dbReference type="PhosphoSitePlus" id="Q02195"/>
<dbReference type="PaxDb" id="10116-ENSRNOP00000012700"/>
<dbReference type="GeneID" id="29348"/>
<dbReference type="KEGG" id="rno:29348"/>
<dbReference type="UCSC" id="RGD:61805">
    <property type="organism name" value="rat"/>
</dbReference>
<dbReference type="AGR" id="RGD:61805"/>
<dbReference type="CTD" id="2252"/>
<dbReference type="RGD" id="61805">
    <property type="gene designation" value="Fgf7"/>
</dbReference>
<dbReference type="eggNOG" id="KOG3885">
    <property type="taxonomic scope" value="Eukaryota"/>
</dbReference>
<dbReference type="InParanoid" id="Q02195"/>
<dbReference type="OrthoDB" id="5987799at2759"/>
<dbReference type="PhylomeDB" id="Q02195"/>
<dbReference type="Reactome" id="R-RNO-109704">
    <property type="pathway name" value="PI3K Cascade"/>
</dbReference>
<dbReference type="Reactome" id="R-RNO-1257604">
    <property type="pathway name" value="PIP3 activates AKT signaling"/>
</dbReference>
<dbReference type="Reactome" id="R-RNO-190377">
    <property type="pathway name" value="FGFR2b ligand binding and activation"/>
</dbReference>
<dbReference type="Reactome" id="R-RNO-5654221">
    <property type="pathway name" value="Phospholipase C-mediated cascade, FGFR2"/>
</dbReference>
<dbReference type="Reactome" id="R-RNO-5654695">
    <property type="pathway name" value="PI-3K cascade:FGFR2"/>
</dbReference>
<dbReference type="Reactome" id="R-RNO-5654699">
    <property type="pathway name" value="SHC-mediated cascade:FGFR2"/>
</dbReference>
<dbReference type="Reactome" id="R-RNO-5654700">
    <property type="pathway name" value="FRS-mediated FGFR2 signaling"/>
</dbReference>
<dbReference type="Reactome" id="R-RNO-5654727">
    <property type="pathway name" value="Negative regulation of FGFR2 signaling"/>
</dbReference>
<dbReference type="Reactome" id="R-RNO-5673001">
    <property type="pathway name" value="RAF/MAP kinase cascade"/>
</dbReference>
<dbReference type="Reactome" id="R-RNO-6811558">
    <property type="pathway name" value="PI5P, PP2A and IER3 Regulate PI3K/AKT Signaling"/>
</dbReference>
<dbReference type="EvolutionaryTrace" id="Q02195"/>
<dbReference type="PRO" id="PR:Q02195"/>
<dbReference type="Proteomes" id="UP000002494">
    <property type="component" value="Unplaced"/>
</dbReference>
<dbReference type="GO" id="GO:0005737">
    <property type="term" value="C:cytoplasm"/>
    <property type="evidence" value="ECO:0000318"/>
    <property type="project" value="GO_Central"/>
</dbReference>
<dbReference type="GO" id="GO:0005576">
    <property type="term" value="C:extracellular region"/>
    <property type="evidence" value="ECO:0000266"/>
    <property type="project" value="RGD"/>
</dbReference>
<dbReference type="GO" id="GO:0005615">
    <property type="term" value="C:extracellular space"/>
    <property type="evidence" value="ECO:0000314"/>
    <property type="project" value="RGD"/>
</dbReference>
<dbReference type="GO" id="GO:0098982">
    <property type="term" value="C:GABA-ergic synapse"/>
    <property type="evidence" value="ECO:0000266"/>
    <property type="project" value="RGD"/>
</dbReference>
<dbReference type="GO" id="GO:0005794">
    <property type="term" value="C:Golgi apparatus"/>
    <property type="evidence" value="ECO:0000266"/>
    <property type="project" value="RGD"/>
</dbReference>
<dbReference type="GO" id="GO:0098794">
    <property type="term" value="C:postsynapse"/>
    <property type="evidence" value="ECO:0000266"/>
    <property type="project" value="RGD"/>
</dbReference>
<dbReference type="GO" id="GO:0042056">
    <property type="term" value="F:chemoattractant activity"/>
    <property type="evidence" value="ECO:0000266"/>
    <property type="project" value="RGD"/>
</dbReference>
<dbReference type="GO" id="GO:0008083">
    <property type="term" value="F:growth factor activity"/>
    <property type="evidence" value="ECO:0000315"/>
    <property type="project" value="RGD"/>
</dbReference>
<dbReference type="GO" id="GO:0008201">
    <property type="term" value="F:heparin binding"/>
    <property type="evidence" value="ECO:0000314"/>
    <property type="project" value="RGD"/>
</dbReference>
<dbReference type="GO" id="GO:0005111">
    <property type="term" value="F:type 2 fibroblast growth factor receptor binding"/>
    <property type="evidence" value="ECO:0000314"/>
    <property type="project" value="RGD"/>
</dbReference>
<dbReference type="GO" id="GO:0030036">
    <property type="term" value="P:actin cytoskeleton organization"/>
    <property type="evidence" value="ECO:0000266"/>
    <property type="project" value="RGD"/>
</dbReference>
<dbReference type="GO" id="GO:0060445">
    <property type="term" value="P:branching involved in salivary gland morphogenesis"/>
    <property type="evidence" value="ECO:0000266"/>
    <property type="project" value="RGD"/>
</dbReference>
<dbReference type="GO" id="GO:0001935">
    <property type="term" value="P:endothelial cell proliferation"/>
    <property type="evidence" value="ECO:0000266"/>
    <property type="project" value="RGD"/>
</dbReference>
<dbReference type="GO" id="GO:0050673">
    <property type="term" value="P:epithelial cell proliferation"/>
    <property type="evidence" value="ECO:0000266"/>
    <property type="project" value="RGD"/>
</dbReference>
<dbReference type="GO" id="GO:0008543">
    <property type="term" value="P:fibroblast growth factor receptor signaling pathway"/>
    <property type="evidence" value="ECO:0000266"/>
    <property type="project" value="RGD"/>
</dbReference>
<dbReference type="GO" id="GO:0031069">
    <property type="term" value="P:hair follicle morphogenesis"/>
    <property type="evidence" value="ECO:0000266"/>
    <property type="project" value="RGD"/>
</dbReference>
<dbReference type="GO" id="GO:0030324">
    <property type="term" value="P:lung development"/>
    <property type="evidence" value="ECO:0000315"/>
    <property type="project" value="RGD"/>
</dbReference>
<dbReference type="GO" id="GO:0010463">
    <property type="term" value="P:mesenchymal cell proliferation"/>
    <property type="evidence" value="ECO:0000266"/>
    <property type="project" value="RGD"/>
</dbReference>
<dbReference type="GO" id="GO:0051450">
    <property type="term" value="P:myoblast proliferation"/>
    <property type="evidence" value="ECO:0000266"/>
    <property type="project" value="RGD"/>
</dbReference>
<dbReference type="GO" id="GO:0022008">
    <property type="term" value="P:neurogenesis"/>
    <property type="evidence" value="ECO:0000318"/>
    <property type="project" value="GO_Central"/>
</dbReference>
<dbReference type="GO" id="GO:0001541">
    <property type="term" value="P:ovarian follicle development"/>
    <property type="evidence" value="ECO:0000315"/>
    <property type="project" value="RGD"/>
</dbReference>
<dbReference type="GO" id="GO:0006656">
    <property type="term" value="P:phosphatidylcholine biosynthetic process"/>
    <property type="evidence" value="ECO:0000315"/>
    <property type="project" value="RGD"/>
</dbReference>
<dbReference type="GO" id="GO:0008654">
    <property type="term" value="P:phospholipid biosynthetic process"/>
    <property type="evidence" value="ECO:0000315"/>
    <property type="project" value="RGD"/>
</dbReference>
<dbReference type="GO" id="GO:0050918">
    <property type="term" value="P:positive chemotaxis"/>
    <property type="evidence" value="ECO:0000266"/>
    <property type="project" value="RGD"/>
</dbReference>
<dbReference type="GO" id="GO:0051781">
    <property type="term" value="P:positive regulation of cell division"/>
    <property type="evidence" value="ECO:0007669"/>
    <property type="project" value="UniProtKB-KW"/>
</dbReference>
<dbReference type="GO" id="GO:0008284">
    <property type="term" value="P:positive regulation of cell population proliferation"/>
    <property type="evidence" value="ECO:0000266"/>
    <property type="project" value="RGD"/>
</dbReference>
<dbReference type="GO" id="GO:0045893">
    <property type="term" value="P:positive regulation of DNA-templated transcription"/>
    <property type="evidence" value="ECO:0000266"/>
    <property type="project" value="RGD"/>
</dbReference>
<dbReference type="GO" id="GO:0001938">
    <property type="term" value="P:positive regulation of endothelial cell proliferation"/>
    <property type="evidence" value="ECO:0000266"/>
    <property type="project" value="RGD"/>
</dbReference>
<dbReference type="GO" id="GO:0050679">
    <property type="term" value="P:positive regulation of epithelial cell proliferation"/>
    <property type="evidence" value="ECO:0000314"/>
    <property type="project" value="RGD"/>
</dbReference>
<dbReference type="GO" id="GO:0060501">
    <property type="term" value="P:positive regulation of epithelial cell proliferation involved in lung morphogenesis"/>
    <property type="evidence" value="ECO:0000266"/>
    <property type="project" value="RGD"/>
</dbReference>
<dbReference type="GO" id="GO:0051549">
    <property type="term" value="P:positive regulation of keratinocyte migration"/>
    <property type="evidence" value="ECO:0000266"/>
    <property type="project" value="RGD"/>
</dbReference>
<dbReference type="GO" id="GO:0010838">
    <property type="term" value="P:positive regulation of keratinocyte proliferation"/>
    <property type="evidence" value="ECO:0000266"/>
    <property type="project" value="RGD"/>
</dbReference>
<dbReference type="GO" id="GO:0043410">
    <property type="term" value="P:positive regulation of MAPK cascade"/>
    <property type="evidence" value="ECO:0000318"/>
    <property type="project" value="GO_Central"/>
</dbReference>
<dbReference type="GO" id="GO:2000288">
    <property type="term" value="P:positive regulation of myoblast proliferation"/>
    <property type="evidence" value="ECO:0000266"/>
    <property type="project" value="RGD"/>
</dbReference>
<dbReference type="GO" id="GO:0034394">
    <property type="term" value="P:protein localization to cell surface"/>
    <property type="evidence" value="ECO:0000266"/>
    <property type="project" value="RGD"/>
</dbReference>
<dbReference type="GO" id="GO:0060665">
    <property type="term" value="P:regulation of branching involved in salivary gland morphogenesis by mesenchymal-epithelial signaling"/>
    <property type="evidence" value="ECO:0000266"/>
    <property type="project" value="RGD"/>
</dbReference>
<dbReference type="GO" id="GO:0030334">
    <property type="term" value="P:regulation of cell migration"/>
    <property type="evidence" value="ECO:0000318"/>
    <property type="project" value="GO_Central"/>
</dbReference>
<dbReference type="GO" id="GO:0090128">
    <property type="term" value="P:regulation of synapse maturation"/>
    <property type="evidence" value="ECO:0000266"/>
    <property type="project" value="RGD"/>
</dbReference>
<dbReference type="GO" id="GO:0061033">
    <property type="term" value="P:secretion by lung epithelial cell involved in lung growth"/>
    <property type="evidence" value="ECO:0000266"/>
    <property type="project" value="RGD"/>
</dbReference>
<dbReference type="GO" id="GO:0043129">
    <property type="term" value="P:surfactant homeostasis"/>
    <property type="evidence" value="ECO:0000315"/>
    <property type="project" value="RGD"/>
</dbReference>
<dbReference type="CDD" id="cd23319">
    <property type="entry name" value="beta-trefoil_FGF7"/>
    <property type="match status" value="1"/>
</dbReference>
<dbReference type="FunFam" id="2.80.10.50:FF:000004">
    <property type="entry name" value="Fibroblast growth factor"/>
    <property type="match status" value="1"/>
</dbReference>
<dbReference type="Gene3D" id="2.80.10.50">
    <property type="match status" value="1"/>
</dbReference>
<dbReference type="InterPro" id="IPR002209">
    <property type="entry name" value="Fibroblast_GF_fam"/>
</dbReference>
<dbReference type="InterPro" id="IPR008996">
    <property type="entry name" value="IL1/FGF"/>
</dbReference>
<dbReference type="PANTHER" id="PTHR11486">
    <property type="entry name" value="FIBROBLAST GROWTH FACTOR"/>
    <property type="match status" value="1"/>
</dbReference>
<dbReference type="Pfam" id="PF00167">
    <property type="entry name" value="FGF"/>
    <property type="match status" value="1"/>
</dbReference>
<dbReference type="PRINTS" id="PR00263">
    <property type="entry name" value="HBGFFGF"/>
</dbReference>
<dbReference type="PRINTS" id="PR00262">
    <property type="entry name" value="IL1HBGF"/>
</dbReference>
<dbReference type="SMART" id="SM00442">
    <property type="entry name" value="FGF"/>
    <property type="match status" value="1"/>
</dbReference>
<dbReference type="SUPFAM" id="SSF50353">
    <property type="entry name" value="Cytokine"/>
    <property type="match status" value="1"/>
</dbReference>
<dbReference type="PROSITE" id="PS00247">
    <property type="entry name" value="HBGF_FGF"/>
    <property type="match status" value="1"/>
</dbReference>
<feature type="signal peptide" evidence="1">
    <location>
        <begin position="1"/>
        <end position="31"/>
    </location>
</feature>
<feature type="chain" id="PRO_0000008968" description="Fibroblast growth factor 7">
    <location>
        <begin position="32"/>
        <end position="194"/>
    </location>
</feature>
<feature type="glycosylation site" description="N-linked (GlcNAc...) asparagine" evidence="2">
    <location>
        <position position="45"/>
    </location>
</feature>
<feature type="glycosylation site" description="N-linked (GlcNAc...) asparagine" evidence="2">
    <location>
        <position position="149"/>
    </location>
</feature>
<feature type="strand" evidence="5">
    <location>
        <begin position="64"/>
        <end position="67"/>
    </location>
</feature>
<feature type="turn" evidence="5">
    <location>
        <begin position="72"/>
        <end position="74"/>
    </location>
</feature>
<feature type="strand" evidence="5">
    <location>
        <begin position="75"/>
        <end position="79"/>
    </location>
</feature>
<feature type="strand" evidence="5">
    <location>
        <begin position="85"/>
        <end position="89"/>
    </location>
</feature>
<feature type="strand" evidence="5">
    <location>
        <begin position="98"/>
        <end position="104"/>
    </location>
</feature>
<feature type="strand" evidence="5">
    <location>
        <begin position="107"/>
        <end position="112"/>
    </location>
</feature>
<feature type="turn" evidence="5">
    <location>
        <begin position="113"/>
        <end position="115"/>
    </location>
</feature>
<feature type="helix" evidence="5">
    <location>
        <begin position="135"/>
        <end position="137"/>
    </location>
</feature>
<feature type="strand" evidence="5">
    <location>
        <begin position="138"/>
        <end position="143"/>
    </location>
</feature>
<feature type="strand" evidence="5">
    <location>
        <begin position="145"/>
        <end position="147"/>
    </location>
</feature>
<feature type="strand" evidence="5">
    <location>
        <begin position="149"/>
        <end position="154"/>
    </location>
</feature>
<feature type="turn" evidence="5">
    <location>
        <begin position="158"/>
        <end position="162"/>
    </location>
</feature>
<feature type="turn" evidence="5">
    <location>
        <begin position="176"/>
        <end position="178"/>
    </location>
</feature>
<feature type="strand" evidence="4">
    <location>
        <begin position="188"/>
        <end position="191"/>
    </location>
</feature>
<evidence type="ECO:0000250" key="1"/>
<evidence type="ECO:0000255" key="2"/>
<evidence type="ECO:0000305" key="3"/>
<evidence type="ECO:0007829" key="4">
    <source>
        <dbReference type="PDB" id="1QQK"/>
    </source>
</evidence>
<evidence type="ECO:0007829" key="5">
    <source>
        <dbReference type="PDB" id="1QQL"/>
    </source>
</evidence>